<comment type="catalytic activity">
    <reaction evidence="1">
        <text>(S)-malate + NAD(+) = pyruvate + CO2 + NADH</text>
        <dbReference type="Rhea" id="RHEA:12653"/>
        <dbReference type="ChEBI" id="CHEBI:15361"/>
        <dbReference type="ChEBI" id="CHEBI:15589"/>
        <dbReference type="ChEBI" id="CHEBI:16526"/>
        <dbReference type="ChEBI" id="CHEBI:57540"/>
        <dbReference type="ChEBI" id="CHEBI:57945"/>
        <dbReference type="EC" id="1.1.1.38"/>
    </reaction>
</comment>
<comment type="catalytic activity">
    <reaction evidence="1">
        <text>oxaloacetate + H(+) = pyruvate + CO2</text>
        <dbReference type="Rhea" id="RHEA:15641"/>
        <dbReference type="ChEBI" id="CHEBI:15361"/>
        <dbReference type="ChEBI" id="CHEBI:15378"/>
        <dbReference type="ChEBI" id="CHEBI:16452"/>
        <dbReference type="ChEBI" id="CHEBI:16526"/>
        <dbReference type="EC" id="1.1.1.38"/>
    </reaction>
</comment>
<comment type="cofactor">
    <cofactor evidence="1">
        <name>Mg(2+)</name>
        <dbReference type="ChEBI" id="CHEBI:18420"/>
    </cofactor>
    <cofactor evidence="1">
        <name>Mn(2+)</name>
        <dbReference type="ChEBI" id="CHEBI:29035"/>
    </cofactor>
    <text evidence="1">Divalent metal cations. Prefers magnesium or manganese.</text>
</comment>
<comment type="subunit">
    <text evidence="1">Homotetramer.</text>
</comment>
<comment type="similarity">
    <text evidence="1">Belongs to the malic enzymes family.</text>
</comment>
<reference key="1">
    <citation type="journal article" date="2011" name="J. Bacteriol.">
        <title>Comparative genomics of 28 Salmonella enterica isolates: evidence for CRISPR-mediated adaptive sublineage evolution.</title>
        <authorList>
            <person name="Fricke W.F."/>
            <person name="Mammel M.K."/>
            <person name="McDermott P.F."/>
            <person name="Tartera C."/>
            <person name="White D.G."/>
            <person name="Leclerc J.E."/>
            <person name="Ravel J."/>
            <person name="Cebula T.A."/>
        </authorList>
    </citation>
    <scope>NUCLEOTIDE SEQUENCE [LARGE SCALE GENOMIC DNA]</scope>
    <source>
        <strain>SL476</strain>
    </source>
</reference>
<accession>B4TII8</accession>
<sequence length="565" mass="62896">METTTKKARSLYIPYAGPVLLEFPLLNKGSAFSVEERRNFNLSGLLPEVVESIEEQAERAWLQYQGFKTEIDKHIYLRNIQDTNETLFYRLVQNHLEEMMPVIYTPTVGAACERFSEIYRRARGVFISYPNRHNMDDILQNVPNHNIKVIVVTDGERILGLGDQGIGGMGIPIGKLSLYTACGGISPAYTLPVVLDVGTNNQQLLNDPLYMGWRHPRITDDEYYAFVDEFIQAVKQRWPDILLQFEDFAQKNAMPLLTRYRDEICSFNDDIQGTAAVTVGTLIAASRAAGSQLSEQKIVFLGAGSAGCGIAEQIIAQTQREGLSEDAARQNVFMVDRFGLLTDRMPNLLPFQAKLVQKCDNLQHWDTENDVLSLLDVVRNVKPDILIGVSGQTGLFTEEIIREMHKHCPRPIVMPLSNPTSRVEATPQDIIAWTEGNALVATGSPFSPVIWKDKVYPIAQCNNAYIFPGIGLGVIASGASRITDEMLMSASETLAKHSPLVNNGEGLVLPALKDIQVVSRAIAFAVGKMAQQQGVAVKTSAEALQQAIDDNFWKPEYRDYRRTSI</sequence>
<feature type="chain" id="PRO_1000186007" description="NAD-dependent malic enzyme">
    <location>
        <begin position="1"/>
        <end position="565"/>
    </location>
</feature>
<feature type="active site" description="Proton donor" evidence="1">
    <location>
        <position position="104"/>
    </location>
</feature>
<feature type="active site" description="Proton acceptor" evidence="1">
    <location>
        <position position="175"/>
    </location>
</feature>
<feature type="binding site" evidence="1">
    <location>
        <position position="157"/>
    </location>
    <ligand>
        <name>NAD(+)</name>
        <dbReference type="ChEBI" id="CHEBI:57540"/>
    </ligand>
</feature>
<feature type="binding site" evidence="1">
    <location>
        <position position="246"/>
    </location>
    <ligand>
        <name>a divalent metal cation</name>
        <dbReference type="ChEBI" id="CHEBI:60240"/>
    </ligand>
</feature>
<feature type="binding site" evidence="1">
    <location>
        <position position="247"/>
    </location>
    <ligand>
        <name>a divalent metal cation</name>
        <dbReference type="ChEBI" id="CHEBI:60240"/>
    </ligand>
</feature>
<feature type="binding site" evidence="1">
    <location>
        <position position="270"/>
    </location>
    <ligand>
        <name>a divalent metal cation</name>
        <dbReference type="ChEBI" id="CHEBI:60240"/>
    </ligand>
</feature>
<feature type="binding site" evidence="1">
    <location>
        <position position="270"/>
    </location>
    <ligand>
        <name>NAD(+)</name>
        <dbReference type="ChEBI" id="CHEBI:57540"/>
    </ligand>
</feature>
<feature type="binding site" evidence="1">
    <location>
        <position position="418"/>
    </location>
    <ligand>
        <name>NAD(+)</name>
        <dbReference type="ChEBI" id="CHEBI:57540"/>
    </ligand>
</feature>
<feature type="site" description="Important for activity" evidence="1">
    <location>
        <position position="270"/>
    </location>
</feature>
<protein>
    <recommendedName>
        <fullName evidence="1">NAD-dependent malic enzyme</fullName>
        <shortName evidence="1">NAD-ME</shortName>
        <ecNumber evidence="1">1.1.1.38</ecNumber>
    </recommendedName>
</protein>
<organism>
    <name type="scientific">Salmonella heidelberg (strain SL476)</name>
    <dbReference type="NCBI Taxonomy" id="454169"/>
    <lineage>
        <taxon>Bacteria</taxon>
        <taxon>Pseudomonadati</taxon>
        <taxon>Pseudomonadota</taxon>
        <taxon>Gammaproteobacteria</taxon>
        <taxon>Enterobacterales</taxon>
        <taxon>Enterobacteriaceae</taxon>
        <taxon>Salmonella</taxon>
    </lineage>
</organism>
<evidence type="ECO:0000255" key="1">
    <source>
        <dbReference type="HAMAP-Rule" id="MF_01619"/>
    </source>
</evidence>
<gene>
    <name evidence="1" type="primary">maeA</name>
    <name type="ordered locus">SeHA_C1743</name>
</gene>
<keyword id="KW-0479">Metal-binding</keyword>
<keyword id="KW-0520">NAD</keyword>
<keyword id="KW-0560">Oxidoreductase</keyword>
<name>MAO1_SALHS</name>
<dbReference type="EC" id="1.1.1.38" evidence="1"/>
<dbReference type="EMBL" id="CP001120">
    <property type="protein sequence ID" value="ACF70103.1"/>
    <property type="molecule type" value="Genomic_DNA"/>
</dbReference>
<dbReference type="RefSeq" id="WP_000450511.1">
    <property type="nucleotide sequence ID" value="NC_011083.1"/>
</dbReference>
<dbReference type="SMR" id="B4TII8"/>
<dbReference type="KEGG" id="seh:SeHA_C1743"/>
<dbReference type="HOGENOM" id="CLU_011405_5_2_6"/>
<dbReference type="Proteomes" id="UP000001866">
    <property type="component" value="Chromosome"/>
</dbReference>
<dbReference type="GO" id="GO:0005829">
    <property type="term" value="C:cytosol"/>
    <property type="evidence" value="ECO:0007669"/>
    <property type="project" value="TreeGrafter"/>
</dbReference>
<dbReference type="GO" id="GO:0004471">
    <property type="term" value="F:malate dehydrogenase (decarboxylating) (NAD+) activity"/>
    <property type="evidence" value="ECO:0007669"/>
    <property type="project" value="UniProtKB-UniRule"/>
</dbReference>
<dbReference type="GO" id="GO:0046872">
    <property type="term" value="F:metal ion binding"/>
    <property type="evidence" value="ECO:0007669"/>
    <property type="project" value="UniProtKB-KW"/>
</dbReference>
<dbReference type="GO" id="GO:0051287">
    <property type="term" value="F:NAD binding"/>
    <property type="evidence" value="ECO:0007669"/>
    <property type="project" value="InterPro"/>
</dbReference>
<dbReference type="GO" id="GO:0008948">
    <property type="term" value="F:oxaloacetate decarboxylase activity"/>
    <property type="evidence" value="ECO:0007669"/>
    <property type="project" value="UniProtKB-UniRule"/>
</dbReference>
<dbReference type="GO" id="GO:0006108">
    <property type="term" value="P:malate metabolic process"/>
    <property type="evidence" value="ECO:0007669"/>
    <property type="project" value="TreeGrafter"/>
</dbReference>
<dbReference type="CDD" id="cd05312">
    <property type="entry name" value="NAD_bind_1_malic_enz"/>
    <property type="match status" value="1"/>
</dbReference>
<dbReference type="FunFam" id="3.40.50.10380:FF:000001">
    <property type="entry name" value="NAD-dependent malic enzyme"/>
    <property type="match status" value="1"/>
</dbReference>
<dbReference type="FunFam" id="3.40.50.720:FF:000055">
    <property type="entry name" value="NAD-dependent malic enzyme"/>
    <property type="match status" value="1"/>
</dbReference>
<dbReference type="Gene3D" id="3.40.50.10380">
    <property type="entry name" value="Malic enzyme, N-terminal domain"/>
    <property type="match status" value="1"/>
</dbReference>
<dbReference type="Gene3D" id="3.40.50.720">
    <property type="entry name" value="NAD(P)-binding Rossmann-like Domain"/>
    <property type="match status" value="1"/>
</dbReference>
<dbReference type="HAMAP" id="MF_01619">
    <property type="entry name" value="NAD_malic_enz"/>
    <property type="match status" value="1"/>
</dbReference>
<dbReference type="InterPro" id="IPR046346">
    <property type="entry name" value="Aminoacid_DH-like_N_sf"/>
</dbReference>
<dbReference type="InterPro" id="IPR015884">
    <property type="entry name" value="Malic_enzyme_CS"/>
</dbReference>
<dbReference type="InterPro" id="IPR012301">
    <property type="entry name" value="Malic_N_dom"/>
</dbReference>
<dbReference type="InterPro" id="IPR037062">
    <property type="entry name" value="Malic_N_dom_sf"/>
</dbReference>
<dbReference type="InterPro" id="IPR012302">
    <property type="entry name" value="Malic_NAD-bd"/>
</dbReference>
<dbReference type="InterPro" id="IPR001891">
    <property type="entry name" value="Malic_OxRdtase"/>
</dbReference>
<dbReference type="InterPro" id="IPR036291">
    <property type="entry name" value="NAD(P)-bd_dom_sf"/>
</dbReference>
<dbReference type="InterPro" id="IPR023667">
    <property type="entry name" value="NAD_malic_enz_proteobac"/>
</dbReference>
<dbReference type="NCBIfam" id="NF010052">
    <property type="entry name" value="PRK13529.1"/>
    <property type="match status" value="1"/>
</dbReference>
<dbReference type="PANTHER" id="PTHR23406">
    <property type="entry name" value="MALIC ENZYME-RELATED"/>
    <property type="match status" value="1"/>
</dbReference>
<dbReference type="PANTHER" id="PTHR23406:SF34">
    <property type="entry name" value="NAD-DEPENDENT MALIC ENZYME, MITOCHONDRIAL"/>
    <property type="match status" value="1"/>
</dbReference>
<dbReference type="Pfam" id="PF00390">
    <property type="entry name" value="malic"/>
    <property type="match status" value="1"/>
</dbReference>
<dbReference type="Pfam" id="PF03949">
    <property type="entry name" value="Malic_M"/>
    <property type="match status" value="1"/>
</dbReference>
<dbReference type="PIRSF" id="PIRSF000106">
    <property type="entry name" value="ME"/>
    <property type="match status" value="1"/>
</dbReference>
<dbReference type="PRINTS" id="PR00072">
    <property type="entry name" value="MALOXRDTASE"/>
</dbReference>
<dbReference type="SMART" id="SM01274">
    <property type="entry name" value="malic"/>
    <property type="match status" value="1"/>
</dbReference>
<dbReference type="SMART" id="SM00919">
    <property type="entry name" value="Malic_M"/>
    <property type="match status" value="1"/>
</dbReference>
<dbReference type="SUPFAM" id="SSF53223">
    <property type="entry name" value="Aminoacid dehydrogenase-like, N-terminal domain"/>
    <property type="match status" value="1"/>
</dbReference>
<dbReference type="SUPFAM" id="SSF51735">
    <property type="entry name" value="NAD(P)-binding Rossmann-fold domains"/>
    <property type="match status" value="1"/>
</dbReference>
<dbReference type="PROSITE" id="PS00331">
    <property type="entry name" value="MALIC_ENZYMES"/>
    <property type="match status" value="1"/>
</dbReference>
<proteinExistence type="inferred from homology"/>